<comment type="function">
    <text evidence="2 7 9 12 14 16 18 19 20 22">Growth factor of the TGF-beta superfamily that plays essential roles in many developmental processes, including cardiogenesis, neurogenesis, and osteogenesis (PubMed:18436533, PubMed:24362451, PubMed:31019025). Induces cartilage and bone formation (PubMed:3201241). Initiates the canonical BMP signaling cascade by associating with type I receptor BMPR1A and type II receptor BMPR2 (PubMed:15064755, PubMed:17295905, PubMed:18436533). Once all three components are bound together in a complex at the cell surface, BMPR2 phosphorylates and activates BMPR1A (PubMed:7791754). In turn, BMPR1A propagates signal by phosphorylating SMAD1/5/8 that travel to the nucleus and act as activators and repressors of transcription of target genes. Also acts to promote expression of HAMP, via the interaction with its receptor BMPR1A/ALK3 (PubMed:31800957). Can also signal through non-canonical pathways such as ERK/MAP kinase signaling cascade that regulates osteoblast differentiation (PubMed:16771708, PubMed:20851880). Also stimulates the differentiation of myoblasts into osteoblasts via the EIF2AK3-EIF2A-ATF4 pathway by stimulating EIF2A phosphorylation which leads to increased expression of ATF4 which plays a central role in osteoblast differentiation (PubMed:24362451). Acts as a positive regulator of odontoblast differentiation during mesenchymal tooth germ formation, expression is repressed during the bell stage by MSX1-mediated inhibition of CTNNB1 signaling (By similarity).</text>
</comment>
<comment type="subunit">
    <text evidence="2 5 6 8 10 11 19 21">Homodimer; disulfide-linked (PubMed:10074410). Interacts with SOSTDC1 (PubMed:15020244). Interacts with GREM2, RGMA, RGMB and RGMC. Interacts with ASPN (By similarity). Interacts with MAFP5 (By similarity). Interacts with FBN1 (via N-terminal domain) and FBN2 (PubMed:18339631). Interacts with type I receptor BMPR1A (PubMed:15064755). Interacts with type II receptor BMPR2 (PubMed:7791754). Interacts with SCUBE3 (PubMed:33308444). Interacts with TNFAIP6 (primarily via Link domain); this interaction is inhibited by hyaluronan. Interacts with ERFE (PubMed:31800957). Interacts with BMPR1A/ALK3; the interaction may induce HAMP expression (PubMed:31800957). Forms heterodimers with BMP6 in vitro; the heterodimer then binds to its receptor BMPR1A /ALK3 and may induce HAMP expression (PubMed:31800957). Interacts with TGFBR3 (PubMed:18184661).</text>
</comment>
<comment type="interaction">
    <interactant intactId="EBI-1029262">
        <id>P12643</id>
    </interactant>
    <interactant intactId="EBI-1029237">
        <id>P36894</id>
        <label>BMPR1A</label>
    </interactant>
    <organismsDiffer>false</organismsDiffer>
    <experiments>17</experiments>
</comment>
<comment type="interaction">
    <interactant intactId="EBI-1029262">
        <id>P12643</id>
    </interactant>
    <interactant intactId="EBI-7527193">
        <id>O00238</id>
        <label>BMPR1B</label>
    </interactant>
    <organismsDiffer>false</organismsDiffer>
    <experiments>3</experiments>
</comment>
<comment type="interaction">
    <interactant intactId="EBI-1029262">
        <id>P12643</id>
    </interactant>
    <interactant intactId="EBI-2349801">
        <id>Q12841</id>
        <label>FSTL1</label>
    </interactant>
    <organismsDiffer>false</organismsDiffer>
    <experiments>2</experiments>
</comment>
<comment type="interaction">
    <interactant intactId="EBI-1029262">
        <id>P12643</id>
    </interactant>
    <interactant intactId="EBI-10900704">
        <id>Q6ZVN8</id>
        <label>HJV</label>
    </interactant>
    <organismsDiffer>false</organismsDiffer>
    <experiments>2</experiments>
</comment>
<comment type="interaction">
    <interactant intactId="EBI-1029262">
        <id>P12643</id>
    </interactant>
    <interactant intactId="EBI-16155543">
        <id>Q6ZVN8-1</id>
        <label>HJV</label>
    </interactant>
    <organismsDiffer>false</organismsDiffer>
    <experiments>2</experiments>
</comment>
<comment type="interaction">
    <interactant intactId="EBI-1029262">
        <id>P12643</id>
    </interactant>
    <interactant intactId="EBI-1035205">
        <id>Q13253</id>
        <label>NOG</label>
    </interactant>
    <organismsDiffer>false</organismsDiffer>
    <experiments>2</experiments>
</comment>
<comment type="interaction">
    <interactant intactId="EBI-1029262">
        <id>P12643</id>
    </interactant>
    <interactant intactId="EBI-16155394">
        <id>Q96B86-1</id>
        <label>RGMA</label>
    </interactant>
    <organismsDiffer>false</organismsDiffer>
    <experiments>2</experiments>
</comment>
<comment type="interaction">
    <interactant intactId="EBI-1029262">
        <id>P12643</id>
    </interactant>
    <interactant intactId="EBI-16155464">
        <id>Q6NW40</id>
        <label>RGMB</label>
    </interactant>
    <organismsDiffer>false</organismsDiffer>
    <experiments>7</experiments>
</comment>
<comment type="interaction">
    <interactant intactId="EBI-1029262">
        <id>P12643</id>
    </interactant>
    <interactant intactId="EBI-1036102">
        <id>P27038</id>
        <label>Acvr2a</label>
    </interactant>
    <organismsDiffer>true</organismsDiffer>
    <experiments>2</experiments>
</comment>
<comment type="interaction">
    <interactant intactId="EBI-9697918">
        <id>PRO_0000033825</id>
    </interactant>
    <interactant intactId="EBI-11700693">
        <id>P98066</id>
        <label>TNFAIP6</label>
    </interactant>
    <organismsDiffer>false</organismsDiffer>
    <experiments>3</experiments>
</comment>
<comment type="subcellular location">
    <subcellularLocation>
        <location>Secreted</location>
    </subcellularLocation>
</comment>
<comment type="tissue specificity">
    <text>Particularly abundant in lung, spleen and colon and in low but significant levels in heart, brain, placenta, liver, skeletal muscle, kidney, pancreas, prostate, ovary and small intestine.</text>
</comment>
<comment type="disease" evidence="13 15">
    <disease id="DI-00195">
        <name>Brachydactyly A2</name>
        <acronym>BDA2</acronym>
        <description>A form of brachydactyly. Brachydactyly defines a group of inherited malformations characterized by shortening of the digits due to abnormal development of the phalanges and/or the metacarpals. In brachydactyly type A2 shortening of the middle phalanges is confined to the index finger and the second toe, all other digits being more or less normal. Because of a rhomboid or triangular shape of the affected middle phalanx, the end of the second finger usually deviates radially.</description>
        <dbReference type="MIM" id="112600"/>
    </disease>
    <text evidence="13 15">The gene represented in this entry is involved in disease pathogenesis. Duplications of a cis-regulatory element located approximately 110 kb downstream of BMP2 have been found in BDA2 families. They likely cause altered BMP2 expression with pathological consequences.</text>
</comment>
<comment type="disease" evidence="17">
    <disease id="DI-05196">
        <name>Short stature, facial dysmorphism, and skeletal anomalies with or without cardiac anomalies 1</name>
        <acronym>SSFSC1</acronym>
        <description>An autosomal dominant disorder characterized by short stature, facial dysmorphism, skeletal anomalies, and variable cardiac defects. Distinctive facial features include midface retrusion, short upturned nose, long philtrum, high-arched or cleft palate, and variable degrees of micrognathia and dental crowding. Skeletal anomalies include patterning defects of the axial skeleton, characterized by 11 pairs of ribs and brachydactyly of the fifth ray. Congenital heart defects are variably observed and appear to involve primarily the cardiac outflow tract.</description>
        <dbReference type="MIM" id="617877"/>
    </disease>
    <text>The disease is caused by variants affecting the gene represented in this entry.</text>
</comment>
<comment type="pharmaceutical">
    <text>Available under the name Infuse (Medtronic Sofamor Danek). Used for treating open tibial shaft fractures.</text>
</comment>
<comment type="similarity">
    <text evidence="24">Belongs to the TGF-beta family.</text>
</comment>
<comment type="online information" name="Wikipedia">
    <link uri="https://en.wikipedia.org/wiki/Bone_morphogenetic_protein_2"/>
    <text>Bone morphogenetic protein 2 entry</text>
</comment>
<reference key="1">
    <citation type="journal article" date="1988" name="Science">
        <title>Novel regulators of bone formation: molecular clones and activities.</title>
        <authorList>
            <person name="Wozney J.M."/>
            <person name="Rosen V."/>
            <person name="Celeste A.J."/>
            <person name="Mitsock L.M."/>
            <person name="Whitters M.J."/>
            <person name="Kriz R.W."/>
            <person name="Hewick R.M."/>
            <person name="Wang E.A."/>
        </authorList>
    </citation>
    <scope>NUCLEOTIDE SEQUENCE [MRNA]</scope>
    <scope>FUNCTION</scope>
</reference>
<reference key="2">
    <citation type="submission" date="1997-12" db="EMBL/GenBank/DDBJ databases">
        <title>Human bone morphogenetic protein 2 (BMP-2) genomic DNA sequence.</title>
        <authorList>
            <person name="Shore E.M."/>
            <person name="Xu M.-Q."/>
            <person name="Calvert G."/>
            <person name="Moriatis J."/>
            <person name="Kaplan F.S."/>
        </authorList>
    </citation>
    <scope>NUCLEOTIDE SEQUENCE [GENOMIC DNA]</scope>
</reference>
<reference key="3">
    <citation type="journal article" date="2001" name="Nature">
        <title>The DNA sequence and comparative analysis of human chromosome 20.</title>
        <authorList>
            <person name="Deloukas P."/>
            <person name="Matthews L.H."/>
            <person name="Ashurst J.L."/>
            <person name="Burton J."/>
            <person name="Gilbert J.G.R."/>
            <person name="Jones M."/>
            <person name="Stavrides G."/>
            <person name="Almeida J.P."/>
            <person name="Babbage A.K."/>
            <person name="Bagguley C.L."/>
            <person name="Bailey J."/>
            <person name="Barlow K.F."/>
            <person name="Bates K.N."/>
            <person name="Beard L.M."/>
            <person name="Beare D.M."/>
            <person name="Beasley O.P."/>
            <person name="Bird C.P."/>
            <person name="Blakey S.E."/>
            <person name="Bridgeman A.M."/>
            <person name="Brown A.J."/>
            <person name="Buck D."/>
            <person name="Burrill W.D."/>
            <person name="Butler A.P."/>
            <person name="Carder C."/>
            <person name="Carter N.P."/>
            <person name="Chapman J.C."/>
            <person name="Clamp M."/>
            <person name="Clark G."/>
            <person name="Clark L.N."/>
            <person name="Clark S.Y."/>
            <person name="Clee C.M."/>
            <person name="Clegg S."/>
            <person name="Cobley V.E."/>
            <person name="Collier R.E."/>
            <person name="Connor R.E."/>
            <person name="Corby N.R."/>
            <person name="Coulson A."/>
            <person name="Coville G.J."/>
            <person name="Deadman R."/>
            <person name="Dhami P.D."/>
            <person name="Dunn M."/>
            <person name="Ellington A.G."/>
            <person name="Frankland J.A."/>
            <person name="Fraser A."/>
            <person name="French L."/>
            <person name="Garner P."/>
            <person name="Grafham D.V."/>
            <person name="Griffiths C."/>
            <person name="Griffiths M.N.D."/>
            <person name="Gwilliam R."/>
            <person name="Hall R.E."/>
            <person name="Hammond S."/>
            <person name="Harley J.L."/>
            <person name="Heath P.D."/>
            <person name="Ho S."/>
            <person name="Holden J.L."/>
            <person name="Howden P.J."/>
            <person name="Huckle E."/>
            <person name="Hunt A.R."/>
            <person name="Hunt S.E."/>
            <person name="Jekosch K."/>
            <person name="Johnson C.M."/>
            <person name="Johnson D."/>
            <person name="Kay M.P."/>
            <person name="Kimberley A.M."/>
            <person name="King A."/>
            <person name="Knights A."/>
            <person name="Laird G.K."/>
            <person name="Lawlor S."/>
            <person name="Lehvaeslaiho M.H."/>
            <person name="Leversha M.A."/>
            <person name="Lloyd C."/>
            <person name="Lloyd D.M."/>
            <person name="Lovell J.D."/>
            <person name="Marsh V.L."/>
            <person name="Martin S.L."/>
            <person name="McConnachie L.J."/>
            <person name="McLay K."/>
            <person name="McMurray A.A."/>
            <person name="Milne S.A."/>
            <person name="Mistry D."/>
            <person name="Moore M.J.F."/>
            <person name="Mullikin J.C."/>
            <person name="Nickerson T."/>
            <person name="Oliver K."/>
            <person name="Parker A."/>
            <person name="Patel R."/>
            <person name="Pearce T.A.V."/>
            <person name="Peck A.I."/>
            <person name="Phillimore B.J.C.T."/>
            <person name="Prathalingam S.R."/>
            <person name="Plumb R.W."/>
            <person name="Ramsay H."/>
            <person name="Rice C.M."/>
            <person name="Ross M.T."/>
            <person name="Scott C.E."/>
            <person name="Sehra H.K."/>
            <person name="Shownkeen R."/>
            <person name="Sims S."/>
            <person name="Skuce C.D."/>
            <person name="Smith M.L."/>
            <person name="Soderlund C."/>
            <person name="Steward C.A."/>
            <person name="Sulston J.E."/>
            <person name="Swann R.M."/>
            <person name="Sycamore N."/>
            <person name="Taylor R."/>
            <person name="Tee L."/>
            <person name="Thomas D.W."/>
            <person name="Thorpe A."/>
            <person name="Tracey A."/>
            <person name="Tromans A.C."/>
            <person name="Vaudin M."/>
            <person name="Wall M."/>
            <person name="Wallis J.M."/>
            <person name="Whitehead S.L."/>
            <person name="Whittaker P."/>
            <person name="Willey D.L."/>
            <person name="Williams L."/>
            <person name="Williams S.A."/>
            <person name="Wilming L."/>
            <person name="Wray P.W."/>
            <person name="Hubbard T."/>
            <person name="Durbin R.M."/>
            <person name="Bentley D.R."/>
            <person name="Beck S."/>
            <person name="Rogers J."/>
        </authorList>
    </citation>
    <scope>NUCLEOTIDE SEQUENCE [LARGE SCALE GENOMIC DNA]</scope>
</reference>
<reference key="4">
    <citation type="journal article" date="1995" name="Mol. Cell. Biol.">
        <title>Human type II receptor for bone morphogenic proteins (BMPs): extension of the two-kinase receptor model to the BMPs.</title>
        <authorList>
            <person name="Liu F."/>
            <person name="Ventura F."/>
            <person name="Doody J."/>
            <person name="Massague J."/>
        </authorList>
    </citation>
    <scope>FUNCTION</scope>
    <scope>INTERACTION WITH BMPR2</scope>
</reference>
<reference key="5">
    <citation type="journal article" date="1997" name="Anal. Chem.">
        <title>Direct isoform analysis of high-mannose-containing glycoproteins by on-line capillary electrophoresis electrospray mass spectrometry.</title>
        <authorList>
            <person name="Yeung B."/>
            <person name="Porter T.J."/>
            <person name="Vath J.E."/>
        </authorList>
    </citation>
    <scope>GLYCOSYLATION AT ASN-338</scope>
</reference>
<reference key="6">
    <citation type="journal article" date="2004" name="Biochem. Biophys. Res. Commun.">
        <title>USAG-1: a bone morphogenetic protein antagonist abundantly expressed in the kidney.</title>
        <authorList>
            <person name="Yanagita M."/>
            <person name="Oka M."/>
            <person name="Watabe T."/>
            <person name="Iguchi H."/>
            <person name="Niida A."/>
            <person name="Takahashi S."/>
            <person name="Akiyama T."/>
            <person name="Miyazono K."/>
            <person name="Yanagisawa M."/>
            <person name="Sakurai T."/>
        </authorList>
    </citation>
    <scope>INTERACTION WITH SOSTDC1</scope>
</reference>
<reference key="7">
    <citation type="journal article" date="2006" name="Biochem. J.">
        <title>Tumour necrosis factor alpha-stimulated gene-6 inhibits osteoblastic differentiation of human mesenchymal stem cells induced by osteogenic differentiation medium and BMP-2.</title>
        <authorList>
            <person name="Tsukahara S."/>
            <person name="Ikeda R."/>
            <person name="Goto S."/>
            <person name="Yoshida K."/>
            <person name="Mitsumori R."/>
            <person name="Sakamoto Y."/>
            <person name="Tajima A."/>
            <person name="Yokoyama T."/>
            <person name="Toh S."/>
            <person name="Furukawa K."/>
            <person name="Inoue I."/>
        </authorList>
    </citation>
    <scope>FUNCTION</scope>
    <scope>INTERACTION WITH TNFAIP6</scope>
</reference>
<reference key="8">
    <citation type="journal article" date="2008" name="J. Biol. Chem.">
        <title>Targeting of bone morphogenetic protein growth factor complexes to fibrillin.</title>
        <authorList>
            <person name="Sengle G."/>
            <person name="Charbonneau N.L."/>
            <person name="Ono R.N."/>
            <person name="Sasaki T."/>
            <person name="Alvarez J."/>
            <person name="Keene D.R."/>
            <person name="Baechinger H.P."/>
            <person name="Sakai L.Y."/>
        </authorList>
    </citation>
    <scope>INTERACTION WITH FBN1 AND FBN2</scope>
</reference>
<reference key="9">
    <citation type="journal article" date="2008" name="J. Biol. Chem.">
        <title>Bone morphogenetic proteins signal through the transforming growth factor-beta type III receptor.</title>
        <authorList>
            <person name="Kirkbride K.C."/>
            <person name="Townsend T.A."/>
            <person name="Bruinsma M.W."/>
            <person name="Barnett J.V."/>
            <person name="Blobe G.C."/>
        </authorList>
    </citation>
    <scope>INTERACTION WITH TGFBR3</scope>
</reference>
<reference key="10">
    <citation type="journal article" date="2008" name="J. Biol. Chem.">
        <title>BMP-2/4 and BMP-6/7 differentially utilize cell surface receptors to induce osteoblastic differentiation of human bone marrow-derived mesenchymal stem cells.</title>
        <authorList>
            <person name="Lavery K."/>
            <person name="Swain P."/>
            <person name="Falb D."/>
            <person name="Alaoui-Ismaili M.H."/>
        </authorList>
    </citation>
    <scope>FUNCTION</scope>
</reference>
<reference key="11">
    <citation type="journal article" date="2010" name="Endocrinology">
        <title>Posttranslational activation of bone morphogenetic protein 2 is mediated by proprotein convertase 6 during decidualization for pregnancy establishment.</title>
        <authorList>
            <person name="Heng S."/>
            <person name="Paule S."/>
            <person name="Hardman B."/>
            <person name="Li Y."/>
            <person name="Singh H."/>
            <person name="Rainczuk A."/>
            <person name="Stephens A.N."/>
            <person name="Nie G."/>
        </authorList>
    </citation>
    <scope>PROTEOLYTIC PROCESSING</scope>
    <scope>PROPEPTIDE</scope>
</reference>
<reference key="12">
    <citation type="journal article" date="2010" name="J. Biol. Chem.">
        <title>BMP2-activated Erk/MAP kinase stabilizes Runx2 by increasing p300 levels and histone acetyltransferase activity.</title>
        <authorList>
            <person name="Jun J.H."/>
            <person name="Yoon W.J."/>
            <person name="Seo S.B."/>
            <person name="Woo K.M."/>
            <person name="Kim G.S."/>
            <person name="Ryoo H.M."/>
            <person name="Baek J.H."/>
        </authorList>
    </citation>
    <scope>FUNCTION</scope>
</reference>
<reference key="13">
    <citation type="journal article" date="2020" name="Blood">
        <title>Erythroferrone lowers hepcidin by sequestering BMP2/6 heterodimer from binding to the BMP type I receptor ALK3.</title>
        <authorList>
            <person name="Wang C.Y."/>
            <person name="Xu Y."/>
            <person name="Traeger L."/>
            <person name="Dogan D.Y."/>
            <person name="Xiao X."/>
            <person name="Steinbicker A.U."/>
            <person name="Babitt J.L."/>
        </authorList>
    </citation>
    <scope>FUNCTION</scope>
    <scope>INTERACTION WITH MOUSE ERFE; MOUSE BMPR1A AND BMP6</scope>
</reference>
<reference key="14">
    <citation type="journal article" date="2014" name="Calcif. Tissue Int.">
        <title>Involvement of the osteoinductive factors, Tmem119 and BMP-2, and the ER stress response PERK-eIF2alpha-ATF4 pathway in the commitment of myoblastic into osteoblastic cells.</title>
        <authorList>
            <person name="Tanaka K."/>
            <person name="Kaji H."/>
            <person name="Yamaguchi T."/>
            <person name="Kanazawa I."/>
            <person name="Canaff L."/>
            <person name="Hendy G.N."/>
            <person name="Sugimoto T."/>
        </authorList>
    </citation>
    <scope>FUNCTION</scope>
</reference>
<reference key="15">
    <citation type="journal article" date="2021" name="Am. J. Hum. Genet.">
        <title>SCUBE3 loss-of-function causes a recognizable recessive developmental disorder due to defective bone morphogenetic protein signaling.</title>
        <authorList>
            <consortium name="Genomics England Research Consortium"/>
            <person name="Lin Y.C."/>
            <person name="Niceta M."/>
            <person name="Muto V."/>
            <person name="Vona B."/>
            <person name="Pagnamenta A.T."/>
            <person name="Maroofian R."/>
            <person name="Beetz C."/>
            <person name="van Duyvenvoorde H."/>
            <person name="Dentici M.L."/>
            <person name="Lauffer P."/>
            <person name="Vallian S."/>
            <person name="Ciolfi A."/>
            <person name="Pizzi S."/>
            <person name="Bauer P."/>
            <person name="Gruening N.M."/>
            <person name="Bellacchio E."/>
            <person name="Del Fattore A."/>
            <person name="Petrini S."/>
            <person name="Shaheen R."/>
            <person name="Tiosano D."/>
            <person name="Halloun R."/>
            <person name="Pode-Shakked B."/>
            <person name="Albayrak H.M."/>
            <person name="Isik E."/>
            <person name="Wit J.M."/>
            <person name="Dittrich M."/>
            <person name="Freire B.L."/>
            <person name="Bertola D.R."/>
            <person name="Jorge A.A.L."/>
            <person name="Barel O."/>
            <person name="Sabir A.H."/>
            <person name="Al Tenaiji A.M.J."/>
            <person name="Taji S.M."/>
            <person name="Al-Sannaa N."/>
            <person name="Al-Abdulwahed H."/>
            <person name="Digilio M.C."/>
            <person name="Irving M."/>
            <person name="Anikster Y."/>
            <person name="Bhavani G.S.L."/>
            <person name="Girisha K.M."/>
            <person name="Haaf T."/>
            <person name="Taylor J.C."/>
            <person name="Dallapiccola B."/>
            <person name="Alkuraya F.S."/>
            <person name="Yang R.B."/>
            <person name="Tartaglia M."/>
        </authorList>
    </citation>
    <scope>INTERACTION WITH SCUBE3</scope>
</reference>
<reference key="16">
    <citation type="journal article" date="1999" name="J. Mol. Biol.">
        <title>Crystal structure of human bone morphogenetic protein-2 at 2.7 A resolution.</title>
        <authorList>
            <person name="Scheufler C."/>
            <person name="Sebald W."/>
            <person name="Huelsmeyer M."/>
        </authorList>
    </citation>
    <scope>X-RAY CRYSTALLOGRAPHY (2.7 ANGSTROMS) OF 292-396</scope>
    <scope>SUBUNIT</scope>
</reference>
<reference evidence="25 26" key="17">
    <citation type="journal article" date="2004" name="Nat. Struct. Mol. Biol.">
        <title>Molecular recognition of BMP-2 and BMP receptor IA.</title>
        <authorList>
            <person name="Keller S."/>
            <person name="Nickel J."/>
            <person name="Zhang J.L."/>
            <person name="Sebald W."/>
            <person name="Mueller T.D."/>
        </authorList>
    </citation>
    <scope>X-RAY CRYSTALLOGRAPHY (1.86 ANGSTROMS) OF 283-396</scope>
    <scope>FUNCTION</scope>
    <scope>INTERACTION WITH BMPR1A</scope>
    <scope>MUTAGENESIS OF LEU-333</scope>
</reference>
<reference evidence="27 28" key="18">
    <citation type="journal article" date="2007" name="BMC Struct. Biol.">
        <title>A silent H-bond can be mutationally activated for high-affinity interaction of BMP-2 and activin type IIB receptor.</title>
        <authorList>
            <person name="Weber D."/>
            <person name="Kotzsch A."/>
            <person name="Nickel J."/>
            <person name="Harth S."/>
            <person name="Seher A."/>
            <person name="Mueller U."/>
            <person name="Sebald W."/>
            <person name="Mueller T.D."/>
        </authorList>
    </citation>
    <scope>X-RAY CRYSTALLOGRAPHY (1.85 ANGSTROMS) OF 283-396</scope>
    <scope>INTERACTION WITH BMPR1A AND ACVR2B</scope>
</reference>
<reference evidence="29" key="19">
    <citation type="journal article" date="2019" name="Sci. Transl. Med.">
        <title>A BMP/activin A chimera is superior to native BMPs and induces bone repair in nonhuman primates when delivered in a composite matrix.</title>
        <authorList>
            <person name="Seeherman H.J."/>
            <person name="Berasi S.P."/>
            <person name="Brown C.T."/>
            <person name="Martinez R.X."/>
            <person name="Juo Z.S."/>
            <person name="Jelinsky S."/>
            <person name="Cain M.J."/>
            <person name="Grode J."/>
            <person name="Tumelty K.E."/>
            <person name="Bohner M."/>
            <person name="Grinberg O."/>
            <person name="Orr N."/>
            <person name="Shoseyov O."/>
            <person name="Eyckmans J."/>
            <person name="Chen C."/>
            <person name="Morales P.R."/>
            <person name="Wilson C.G."/>
            <person name="Vanderploeg E.J."/>
            <person name="Wozney J.M."/>
        </authorList>
    </citation>
    <scope>X-RAY CRYSTALLOGRAPHY (2.68 ANGSTROMS) OF 289-396</scope>
    <scope>FUNCTION</scope>
</reference>
<reference key="20">
    <citation type="journal article" date="2009" name="Am. J. Hum. Genet.">
        <title>Duplications involving a conserved regulatory element downstream of BMP2 are associated with brachydactyly type A2.</title>
        <authorList>
            <person name="Dathe K."/>
            <person name="Kjaer K.W."/>
            <person name="Brehm A."/>
            <person name="Meinecke P."/>
            <person name="Nuernberg P."/>
            <person name="Neto J.C."/>
            <person name="Brunoni D."/>
            <person name="Tommerup N."/>
            <person name="Ott C.E."/>
            <person name="Klopocki E."/>
            <person name="Seemann P."/>
            <person name="Mundlos S."/>
        </authorList>
    </citation>
    <scope>INVOLVEMENT IN BDA2</scope>
</reference>
<reference key="21">
    <citation type="journal article" date="2011" name="J. Med. Genet.">
        <title>A 4.6 kb genomic duplication on 20p12.2-12.3 is associated with brachydactyly type A2 in a Chinese family.</title>
        <authorList>
            <person name="Su P."/>
            <person name="Ding H."/>
            <person name="Huang D."/>
            <person name="Zhou Y."/>
            <person name="Huang W."/>
            <person name="Zhong L."/>
            <person name="Vyse T.J."/>
            <person name="Wang Y."/>
        </authorList>
    </citation>
    <scope>INVOLVEMENT IN BDA2</scope>
</reference>
<reference key="22">
    <citation type="journal article" date="2017" name="Am. J. Hum. Genet.">
        <title>Monoallelic BMP2 variants predicted to result in haploinsufficiency cause craniofacial, skeletal, and cardiac features overlapping those of 20p12 deletions.</title>
        <authorList>
            <person name="Tan T.Y."/>
            <person name="Gonzaga-Jauregui C."/>
            <person name="Bhoj E.J."/>
            <person name="Strauss K.A."/>
            <person name="Brigatti K."/>
            <person name="Puffenberger E."/>
            <person name="Li D."/>
            <person name="Xie L."/>
            <person name="Das N."/>
            <person name="Skubas I."/>
            <person name="Deckelbaum R.A."/>
            <person name="Hughes V."/>
            <person name="Brydges S."/>
            <person name="Hatsell S."/>
            <person name="Siao C.J."/>
            <person name="Dominguez M.G."/>
            <person name="Economides A."/>
            <person name="Overton J.D."/>
            <person name="Mayne V."/>
            <person name="Simm P.J."/>
            <person name="Jones B.O."/>
            <person name="Eggers S."/>
            <person name="Le Guyader G."/>
            <person name="Pelluard F."/>
            <person name="Haack T.B."/>
            <person name="Sturm M."/>
            <person name="Riess A."/>
            <person name="Waldmueller S."/>
            <person name="Hofbeck M."/>
            <person name="Steindl K."/>
            <person name="Joset P."/>
            <person name="Rauch A."/>
            <person name="Hakonarson H."/>
            <person name="Baker N.L."/>
            <person name="Farlie P.G."/>
        </authorList>
    </citation>
    <scope>INVOLVEMENT IN SSFSC1</scope>
    <scope>VARIANTS SSFSC1 27-GLU--ARG-396 DEL; 154-ARG--ARG-396 DEL AND 329-CYS--ARG-396 DEL</scope>
</reference>
<organism>
    <name type="scientific">Homo sapiens</name>
    <name type="common">Human</name>
    <dbReference type="NCBI Taxonomy" id="9606"/>
    <lineage>
        <taxon>Eukaryota</taxon>
        <taxon>Metazoa</taxon>
        <taxon>Chordata</taxon>
        <taxon>Craniata</taxon>
        <taxon>Vertebrata</taxon>
        <taxon>Euteleostomi</taxon>
        <taxon>Mammalia</taxon>
        <taxon>Eutheria</taxon>
        <taxon>Euarchontoglires</taxon>
        <taxon>Primates</taxon>
        <taxon>Haplorrhini</taxon>
        <taxon>Catarrhini</taxon>
        <taxon>Hominidae</taxon>
        <taxon>Homo</taxon>
    </lineage>
</organism>
<dbReference type="EMBL" id="M22489">
    <property type="protein sequence ID" value="AAA51834.1"/>
    <property type="molecule type" value="mRNA"/>
</dbReference>
<dbReference type="EMBL" id="AF040249">
    <property type="protein sequence ID" value="AAF21646.1"/>
    <property type="molecule type" value="Genomic_DNA"/>
</dbReference>
<dbReference type="EMBL" id="AL035668">
    <property type="status" value="NOT_ANNOTATED_CDS"/>
    <property type="molecule type" value="Genomic_DNA"/>
</dbReference>
<dbReference type="CCDS" id="CCDS13099.1"/>
<dbReference type="PIR" id="B37278">
    <property type="entry name" value="BMHU2"/>
</dbReference>
<dbReference type="RefSeq" id="NP_001191.1">
    <property type="nucleotide sequence ID" value="NM_001200.4"/>
</dbReference>
<dbReference type="PDB" id="1ES7">
    <property type="method" value="X-ray"/>
    <property type="resolution" value="2.90 A"/>
    <property type="chains" value="A/C=283-396"/>
</dbReference>
<dbReference type="PDB" id="1REU">
    <property type="method" value="X-ray"/>
    <property type="resolution" value="2.65 A"/>
    <property type="chains" value="A=294-396"/>
</dbReference>
<dbReference type="PDB" id="1REW">
    <property type="method" value="X-ray"/>
    <property type="resolution" value="1.86 A"/>
    <property type="chains" value="A/B=283-396"/>
</dbReference>
<dbReference type="PDB" id="2GOO">
    <property type="method" value="X-ray"/>
    <property type="resolution" value="2.20 A"/>
    <property type="chains" value="A/D=283-396"/>
</dbReference>
<dbReference type="PDB" id="2H62">
    <property type="method" value="X-ray"/>
    <property type="resolution" value="1.85 A"/>
    <property type="chains" value="A/B=283-396"/>
</dbReference>
<dbReference type="PDB" id="2H64">
    <property type="method" value="X-ray"/>
    <property type="resolution" value="1.92 A"/>
    <property type="chains" value="A=283-396"/>
</dbReference>
<dbReference type="PDB" id="2QJ9">
    <property type="method" value="X-ray"/>
    <property type="resolution" value="2.44 A"/>
    <property type="chains" value="A/B=283-396"/>
</dbReference>
<dbReference type="PDB" id="2QJA">
    <property type="method" value="X-ray"/>
    <property type="resolution" value="2.60 A"/>
    <property type="chains" value="A/B=283-396"/>
</dbReference>
<dbReference type="PDB" id="2QJB">
    <property type="method" value="X-ray"/>
    <property type="resolution" value="2.50 A"/>
    <property type="chains" value="A/B=283-396"/>
</dbReference>
<dbReference type="PDB" id="3BK3">
    <property type="method" value="X-ray"/>
    <property type="resolution" value="2.70 A"/>
    <property type="chains" value="A/B=283-396"/>
</dbReference>
<dbReference type="PDB" id="3BMP">
    <property type="method" value="X-ray"/>
    <property type="resolution" value="2.70 A"/>
    <property type="chains" value="A=283-396"/>
</dbReference>
<dbReference type="PDB" id="4MID">
    <property type="method" value="X-ray"/>
    <property type="resolution" value="2.14 A"/>
    <property type="chains" value="A=283-314"/>
</dbReference>
<dbReference type="PDB" id="4N1D">
    <property type="method" value="X-ray"/>
    <property type="resolution" value="1.91 A"/>
    <property type="chains" value="A=283-305, A=362-396"/>
</dbReference>
<dbReference type="PDB" id="4UHY">
    <property type="method" value="X-ray"/>
    <property type="resolution" value="3.20 A"/>
    <property type="chains" value="A/B=283-396"/>
</dbReference>
<dbReference type="PDB" id="4UHZ">
    <property type="method" value="X-ray"/>
    <property type="resolution" value="2.85 A"/>
    <property type="chains" value="A=283-396"/>
</dbReference>
<dbReference type="PDB" id="4UI0">
    <property type="method" value="X-ray"/>
    <property type="resolution" value="2.80 A"/>
    <property type="chains" value="A/B=283-396"/>
</dbReference>
<dbReference type="PDB" id="4UI1">
    <property type="method" value="X-ray"/>
    <property type="resolution" value="2.35 A"/>
    <property type="chains" value="A/B=283-396"/>
</dbReference>
<dbReference type="PDB" id="4UI2">
    <property type="method" value="X-ray"/>
    <property type="resolution" value="3.15 A"/>
    <property type="chains" value="B=283-396"/>
</dbReference>
<dbReference type="PDB" id="6OMN">
    <property type="method" value="X-ray"/>
    <property type="resolution" value="2.68 A"/>
    <property type="chains" value="E/F/G/H=289-396"/>
</dbReference>
<dbReference type="PDB" id="7AG0">
    <property type="method" value="X-ray"/>
    <property type="resolution" value="3.10 A"/>
    <property type="chains" value="B=283-396"/>
</dbReference>
<dbReference type="PDB" id="8E3G">
    <property type="method" value="X-ray"/>
    <property type="resolution" value="2.80 A"/>
    <property type="chains" value="A/C=283-396"/>
</dbReference>
<dbReference type="PDBsum" id="1ES7"/>
<dbReference type="PDBsum" id="1REU"/>
<dbReference type="PDBsum" id="1REW"/>
<dbReference type="PDBsum" id="2GOO"/>
<dbReference type="PDBsum" id="2H62"/>
<dbReference type="PDBsum" id="2H64"/>
<dbReference type="PDBsum" id="2QJ9"/>
<dbReference type="PDBsum" id="2QJA"/>
<dbReference type="PDBsum" id="2QJB"/>
<dbReference type="PDBsum" id="3BK3"/>
<dbReference type="PDBsum" id="3BMP"/>
<dbReference type="PDBsum" id="4MID"/>
<dbReference type="PDBsum" id="4N1D"/>
<dbReference type="PDBsum" id="4UHY"/>
<dbReference type="PDBsum" id="4UHZ"/>
<dbReference type="PDBsum" id="4UI0"/>
<dbReference type="PDBsum" id="4UI1"/>
<dbReference type="PDBsum" id="4UI2"/>
<dbReference type="PDBsum" id="6OMN"/>
<dbReference type="PDBsum" id="7AG0"/>
<dbReference type="PDBsum" id="8E3G"/>
<dbReference type="SMR" id="P12643"/>
<dbReference type="BioGRID" id="107118">
    <property type="interactions" value="59"/>
</dbReference>
<dbReference type="CORUM" id="P12643"/>
<dbReference type="DIP" id="DIP-5792N"/>
<dbReference type="FunCoup" id="P12643">
    <property type="interactions" value="540"/>
</dbReference>
<dbReference type="IntAct" id="P12643">
    <property type="interactions" value="22"/>
</dbReference>
<dbReference type="MINT" id="P12643"/>
<dbReference type="STRING" id="9606.ENSP00000368104"/>
<dbReference type="BindingDB" id="P12643"/>
<dbReference type="ChEMBL" id="CHEMBL1926496"/>
<dbReference type="GlyCosmos" id="P12643">
    <property type="glycosylation" value="5 sites, No reported glycans"/>
</dbReference>
<dbReference type="GlyGen" id="P12643">
    <property type="glycosylation" value="7 sites, 1 N-linked glycan (2 sites), 1 O-linked glycan (1 site)"/>
</dbReference>
<dbReference type="iPTMnet" id="P12643"/>
<dbReference type="PhosphoSitePlus" id="P12643"/>
<dbReference type="BioMuta" id="BMP2"/>
<dbReference type="DMDM" id="115068"/>
<dbReference type="jPOST" id="P12643"/>
<dbReference type="MassIVE" id="P12643"/>
<dbReference type="PaxDb" id="9606-ENSP00000368104"/>
<dbReference type="PeptideAtlas" id="P12643"/>
<dbReference type="ProteomicsDB" id="52860"/>
<dbReference type="Antibodypedia" id="8441">
    <property type="antibodies" value="1018 antibodies from 43 providers"/>
</dbReference>
<dbReference type="DNASU" id="650"/>
<dbReference type="Ensembl" id="ENST00000378827.5">
    <property type="protein sequence ID" value="ENSP00000368104.3"/>
    <property type="gene ID" value="ENSG00000125845.7"/>
</dbReference>
<dbReference type="GeneID" id="650"/>
<dbReference type="KEGG" id="hsa:650"/>
<dbReference type="MANE-Select" id="ENST00000378827.5">
    <property type="protein sequence ID" value="ENSP00000368104.3"/>
    <property type="RefSeq nucleotide sequence ID" value="NM_001200.4"/>
    <property type="RefSeq protein sequence ID" value="NP_001191.1"/>
</dbReference>
<dbReference type="UCSC" id="uc002wmu.2">
    <property type="organism name" value="human"/>
</dbReference>
<dbReference type="AGR" id="HGNC:1069"/>
<dbReference type="CTD" id="650"/>
<dbReference type="DisGeNET" id="650"/>
<dbReference type="GeneCards" id="BMP2"/>
<dbReference type="HGNC" id="HGNC:1069">
    <property type="gene designation" value="BMP2"/>
</dbReference>
<dbReference type="HPA" id="ENSG00000125845">
    <property type="expression patterns" value="Low tissue specificity"/>
</dbReference>
<dbReference type="MalaCards" id="BMP2"/>
<dbReference type="MIM" id="112261">
    <property type="type" value="gene"/>
</dbReference>
<dbReference type="MIM" id="112600">
    <property type="type" value="phenotype"/>
</dbReference>
<dbReference type="MIM" id="617877">
    <property type="type" value="phenotype"/>
</dbReference>
<dbReference type="neXtProt" id="NX_P12643"/>
<dbReference type="OpenTargets" id="ENSG00000125845"/>
<dbReference type="Orphanet" id="261295">
    <property type="disease" value="20p12.3 microdeletion syndrome"/>
</dbReference>
<dbReference type="Orphanet" id="93396">
    <property type="disease" value="Brachydactyly type A2"/>
</dbReference>
<dbReference type="PharmGKB" id="PA25379"/>
<dbReference type="VEuPathDB" id="HostDB:ENSG00000125845"/>
<dbReference type="eggNOG" id="KOG3900">
    <property type="taxonomic scope" value="Eukaryota"/>
</dbReference>
<dbReference type="GeneTree" id="ENSGT00940000155666"/>
<dbReference type="HOGENOM" id="CLU_020515_4_2_1"/>
<dbReference type="InParanoid" id="P12643"/>
<dbReference type="OMA" id="VMRWIAH"/>
<dbReference type="OrthoDB" id="5987191at2759"/>
<dbReference type="PAN-GO" id="P12643">
    <property type="GO annotations" value="7 GO annotations based on evolutionary models"/>
</dbReference>
<dbReference type="PhylomeDB" id="P12643"/>
<dbReference type="TreeFam" id="TF351789"/>
<dbReference type="PathwayCommons" id="P12643"/>
<dbReference type="Reactome" id="R-HSA-201451">
    <property type="pathway name" value="Signaling by BMP"/>
</dbReference>
<dbReference type="Reactome" id="R-HSA-2129379">
    <property type="pathway name" value="Molecules associated with elastic fibres"/>
</dbReference>
<dbReference type="Reactome" id="R-HSA-8878166">
    <property type="pathway name" value="Transcriptional regulation by RUNX2"/>
</dbReference>
<dbReference type="Reactome" id="R-HSA-8939902">
    <property type="pathway name" value="Regulation of RUNX2 expression and activity"/>
</dbReference>
<dbReference type="SignaLink" id="P12643"/>
<dbReference type="SIGNOR" id="P12643"/>
<dbReference type="BioGRID-ORCS" id="650">
    <property type="hits" value="9 hits in 1151 CRISPR screens"/>
</dbReference>
<dbReference type="ChiTaRS" id="BMP2">
    <property type="organism name" value="human"/>
</dbReference>
<dbReference type="EvolutionaryTrace" id="P12643"/>
<dbReference type="GeneWiki" id="Bone_morphogenetic_protein_2"/>
<dbReference type="GenomeRNAi" id="650"/>
<dbReference type="Pharos" id="P12643">
    <property type="development level" value="Tbio"/>
</dbReference>
<dbReference type="PRO" id="PR:P12643"/>
<dbReference type="Proteomes" id="UP000005640">
    <property type="component" value="Chromosome 20"/>
</dbReference>
<dbReference type="RNAct" id="P12643">
    <property type="molecule type" value="protein"/>
</dbReference>
<dbReference type="Bgee" id="ENSG00000125845">
    <property type="expression patterns" value="Expressed in cartilage tissue and 166 other cell types or tissues"/>
</dbReference>
<dbReference type="ExpressionAtlas" id="P12643">
    <property type="expression patterns" value="baseline and differential"/>
</dbReference>
<dbReference type="GO" id="GO:0070724">
    <property type="term" value="C:BMP receptor complex"/>
    <property type="evidence" value="ECO:0000314"/>
    <property type="project" value="BHF-UCL"/>
</dbReference>
<dbReference type="GO" id="GO:0009986">
    <property type="term" value="C:cell surface"/>
    <property type="evidence" value="ECO:0000314"/>
    <property type="project" value="UniProtKB"/>
</dbReference>
<dbReference type="GO" id="GO:0005929">
    <property type="term" value="C:cilium"/>
    <property type="evidence" value="ECO:0000314"/>
    <property type="project" value="HPA"/>
</dbReference>
<dbReference type="GO" id="GO:0150005">
    <property type="term" value="C:enzyme activator complex"/>
    <property type="evidence" value="ECO:0000314"/>
    <property type="project" value="UniProt"/>
</dbReference>
<dbReference type="GO" id="GO:0005576">
    <property type="term" value="C:extracellular region"/>
    <property type="evidence" value="ECO:0000304"/>
    <property type="project" value="Reactome"/>
</dbReference>
<dbReference type="GO" id="GO:0005615">
    <property type="term" value="C:extracellular space"/>
    <property type="evidence" value="ECO:0000314"/>
    <property type="project" value="BHF-UCL"/>
</dbReference>
<dbReference type="GO" id="GO:0043231">
    <property type="term" value="C:intracellular membrane-bounded organelle"/>
    <property type="evidence" value="ECO:0000314"/>
    <property type="project" value="HPA"/>
</dbReference>
<dbReference type="GO" id="GO:0005886">
    <property type="term" value="C:plasma membrane"/>
    <property type="evidence" value="ECO:0000314"/>
    <property type="project" value="HPA"/>
</dbReference>
<dbReference type="GO" id="GO:0070700">
    <property type="term" value="F:BMP receptor binding"/>
    <property type="evidence" value="ECO:0000314"/>
    <property type="project" value="MGI"/>
</dbReference>
<dbReference type="GO" id="GO:0039706">
    <property type="term" value="F:co-receptor binding"/>
    <property type="evidence" value="ECO:0000353"/>
    <property type="project" value="BHF-UCL"/>
</dbReference>
<dbReference type="GO" id="GO:0005125">
    <property type="term" value="F:cytokine activity"/>
    <property type="evidence" value="ECO:0000315"/>
    <property type="project" value="BHF-UCL"/>
</dbReference>
<dbReference type="GO" id="GO:0008083">
    <property type="term" value="F:growth factor activity"/>
    <property type="evidence" value="ECO:0000314"/>
    <property type="project" value="UniProt"/>
</dbReference>
<dbReference type="GO" id="GO:0019211">
    <property type="term" value="F:phosphatase activator activity"/>
    <property type="evidence" value="ECO:0000314"/>
    <property type="project" value="MGI"/>
</dbReference>
<dbReference type="GO" id="GO:0043539">
    <property type="term" value="F:protein serine/threonine kinase activator activity"/>
    <property type="evidence" value="ECO:0000314"/>
    <property type="project" value="UniProt"/>
</dbReference>
<dbReference type="GO" id="GO:0005102">
    <property type="term" value="F:signaling receptor binding"/>
    <property type="evidence" value="ECO:0000304"/>
    <property type="project" value="ProtInc"/>
</dbReference>
<dbReference type="GO" id="GO:0036305">
    <property type="term" value="P:ameloblast differentiation"/>
    <property type="evidence" value="ECO:0007669"/>
    <property type="project" value="Ensembl"/>
</dbReference>
<dbReference type="GO" id="GO:0009887">
    <property type="term" value="P:animal organ morphogenesis"/>
    <property type="evidence" value="ECO:0000250"/>
    <property type="project" value="UniProtKB"/>
</dbReference>
<dbReference type="GO" id="GO:0003176">
    <property type="term" value="P:aortic valve development"/>
    <property type="evidence" value="ECO:0000250"/>
    <property type="project" value="BHF-UCL"/>
</dbReference>
<dbReference type="GO" id="GO:0048708">
    <property type="term" value="P:astrocyte differentiation"/>
    <property type="evidence" value="ECO:0007669"/>
    <property type="project" value="Ensembl"/>
</dbReference>
<dbReference type="GO" id="GO:1905222">
    <property type="term" value="P:atrioventricular canal morphogenesis"/>
    <property type="evidence" value="ECO:0000250"/>
    <property type="project" value="BHF-UCL"/>
</dbReference>
<dbReference type="GO" id="GO:0003181">
    <property type="term" value="P:atrioventricular valve morphogenesis"/>
    <property type="evidence" value="ECO:0000250"/>
    <property type="project" value="UniProtKB"/>
</dbReference>
<dbReference type="GO" id="GO:0030509">
    <property type="term" value="P:BMP signaling pathway"/>
    <property type="evidence" value="ECO:0000314"/>
    <property type="project" value="UniProtKB"/>
</dbReference>
<dbReference type="GO" id="GO:0060348">
    <property type="term" value="P:bone development"/>
    <property type="evidence" value="ECO:0007669"/>
    <property type="project" value="Ensembl"/>
</dbReference>
<dbReference type="GO" id="GO:0030282">
    <property type="term" value="P:bone mineralization"/>
    <property type="evidence" value="ECO:0000250"/>
    <property type="project" value="UniProtKB"/>
</dbReference>
<dbReference type="GO" id="GO:0001658">
    <property type="term" value="P:branching involved in ureteric bud morphogenesis"/>
    <property type="evidence" value="ECO:0000250"/>
    <property type="project" value="UniProtKB"/>
</dbReference>
<dbReference type="GO" id="GO:0003210">
    <property type="term" value="P:cardiac atrium formation"/>
    <property type="evidence" value="ECO:0000250"/>
    <property type="project" value="BHF-UCL"/>
</dbReference>
<dbReference type="GO" id="GO:0060317">
    <property type="term" value="P:cardiac epithelial to mesenchymal transition"/>
    <property type="evidence" value="ECO:0000314"/>
    <property type="project" value="BHF-UCL"/>
</dbReference>
<dbReference type="GO" id="GO:1905072">
    <property type="term" value="P:cardiac jelly development"/>
    <property type="evidence" value="ECO:0000250"/>
    <property type="project" value="BHF-UCL"/>
</dbReference>
<dbReference type="GO" id="GO:0055007">
    <property type="term" value="P:cardiac muscle cell differentiation"/>
    <property type="evidence" value="ECO:0000315"/>
    <property type="project" value="BHF-UCL"/>
</dbReference>
<dbReference type="GO" id="GO:0055008">
    <property type="term" value="P:cardiac muscle tissue morphogenesis"/>
    <property type="evidence" value="ECO:0000250"/>
    <property type="project" value="UniProtKB"/>
</dbReference>
<dbReference type="GO" id="GO:0035051">
    <property type="term" value="P:cardiocyte differentiation"/>
    <property type="evidence" value="ECO:0000314"/>
    <property type="project" value="MGI"/>
</dbReference>
<dbReference type="GO" id="GO:0045165">
    <property type="term" value="P:cell fate commitment"/>
    <property type="evidence" value="ECO:0000250"/>
    <property type="project" value="UniProtKB"/>
</dbReference>
<dbReference type="GO" id="GO:0007267">
    <property type="term" value="P:cell-cell signaling"/>
    <property type="evidence" value="ECO:0000304"/>
    <property type="project" value="ProtInc"/>
</dbReference>
<dbReference type="GO" id="GO:0071773">
    <property type="term" value="P:cellular response to BMP stimulus"/>
    <property type="evidence" value="ECO:0000315"/>
    <property type="project" value="BHF-UCL"/>
</dbReference>
<dbReference type="GO" id="GO:0002062">
    <property type="term" value="P:chondrocyte differentiation"/>
    <property type="evidence" value="ECO:0000314"/>
    <property type="project" value="AgBase"/>
</dbReference>
<dbReference type="GO" id="GO:0060128">
    <property type="term" value="P:corticotropin hormone secreting cell differentiation"/>
    <property type="evidence" value="ECO:0000250"/>
    <property type="project" value="UniProtKB"/>
</dbReference>
<dbReference type="GO" id="GO:0035054">
    <property type="term" value="P:embryonic heart tube anterior/posterior pattern specification"/>
    <property type="evidence" value="ECO:0000250"/>
    <property type="project" value="UniProtKB"/>
</dbReference>
<dbReference type="GO" id="GO:0003272">
    <property type="term" value="P:endocardial cushion formation"/>
    <property type="evidence" value="ECO:0000250"/>
    <property type="project" value="BHF-UCL"/>
</dbReference>
<dbReference type="GO" id="GO:0003203">
    <property type="term" value="P:endocardial cushion morphogenesis"/>
    <property type="evidence" value="ECO:0000250"/>
    <property type="project" value="UniProtKB"/>
</dbReference>
<dbReference type="GO" id="GO:0003133">
    <property type="term" value="P:endodermal-mesodermal cell signaling"/>
    <property type="evidence" value="ECO:0000314"/>
    <property type="project" value="BHF-UCL"/>
</dbReference>
<dbReference type="GO" id="GO:0001837">
    <property type="term" value="P:epithelial to mesenchymal transition"/>
    <property type="evidence" value="ECO:0000314"/>
    <property type="project" value="MGI"/>
</dbReference>
<dbReference type="GO" id="GO:0007507">
    <property type="term" value="P:heart development"/>
    <property type="evidence" value="ECO:0000314"/>
    <property type="project" value="BHF-UCL"/>
</dbReference>
<dbReference type="GO" id="GO:0003129">
    <property type="term" value="P:heart induction"/>
    <property type="evidence" value="ECO:0000314"/>
    <property type="project" value="BHF-UCL"/>
</dbReference>
<dbReference type="GO" id="GO:0001701">
    <property type="term" value="P:in utero embryonic development"/>
    <property type="evidence" value="ECO:0000250"/>
    <property type="project" value="UniProtKB"/>
</dbReference>
<dbReference type="GO" id="GO:0006954">
    <property type="term" value="P:inflammatory response"/>
    <property type="evidence" value="ECO:0000250"/>
    <property type="project" value="UniProtKB"/>
</dbReference>
<dbReference type="GO" id="GO:0048839">
    <property type="term" value="P:inner ear development"/>
    <property type="evidence" value="ECO:0000250"/>
    <property type="project" value="UniProtKB"/>
</dbReference>
<dbReference type="GO" id="GO:0060426">
    <property type="term" value="P:lung vasculature development"/>
    <property type="evidence" value="ECO:0000315"/>
    <property type="project" value="UniProtKB"/>
</dbReference>
<dbReference type="GO" id="GO:0048762">
    <property type="term" value="P:mesenchymal cell differentiation"/>
    <property type="evidence" value="ECO:0000314"/>
    <property type="project" value="UniProtKB"/>
</dbReference>
<dbReference type="GO" id="GO:0072138">
    <property type="term" value="P:mesenchymal cell proliferation involved in ureteric bud development"/>
    <property type="evidence" value="ECO:0000250"/>
    <property type="project" value="UniProtKB"/>
</dbReference>
<dbReference type="GO" id="GO:0060485">
    <property type="term" value="P:mesenchyme development"/>
    <property type="evidence" value="ECO:0000315"/>
    <property type="project" value="BHF-UCL"/>
</dbReference>
<dbReference type="GO" id="GO:0032348">
    <property type="term" value="P:negative regulation of aldosterone biosynthetic process"/>
    <property type="evidence" value="ECO:0000314"/>
    <property type="project" value="BHF-UCL"/>
</dbReference>
<dbReference type="GO" id="GO:0051042">
    <property type="term" value="P:negative regulation of calcium-independent cell-cell adhesion"/>
    <property type="evidence" value="ECO:0000314"/>
    <property type="project" value="AgBase"/>
</dbReference>
<dbReference type="GO" id="GO:0090090">
    <property type="term" value="P:negative regulation of canonical Wnt signaling pathway"/>
    <property type="evidence" value="ECO:0000314"/>
    <property type="project" value="BHF-UCL"/>
</dbReference>
<dbReference type="GO" id="GO:2000726">
    <property type="term" value="P:negative regulation of cardiac muscle cell differentiation"/>
    <property type="evidence" value="ECO:0000314"/>
    <property type="project" value="BHF-UCL"/>
</dbReference>
<dbReference type="GO" id="GO:0045786">
    <property type="term" value="P:negative regulation of cell cycle"/>
    <property type="evidence" value="ECO:0000314"/>
    <property type="project" value="HGNC-UCL"/>
</dbReference>
<dbReference type="GO" id="GO:0008285">
    <property type="term" value="P:negative regulation of cell population proliferation"/>
    <property type="evidence" value="ECO:0000314"/>
    <property type="project" value="BHF-UCL"/>
</dbReference>
<dbReference type="GO" id="GO:2000065">
    <property type="term" value="P:negative regulation of cortisol biosynthetic process"/>
    <property type="evidence" value="ECO:0000314"/>
    <property type="project" value="BHF-UCL"/>
</dbReference>
<dbReference type="GO" id="GO:0045892">
    <property type="term" value="P:negative regulation of DNA-templated transcription"/>
    <property type="evidence" value="ECO:0000314"/>
    <property type="project" value="BHF-UCL"/>
</dbReference>
<dbReference type="GO" id="GO:0045599">
    <property type="term" value="P:negative regulation of fat cell differentiation"/>
    <property type="evidence" value="ECO:0000314"/>
    <property type="project" value="BHF-UCL"/>
</dbReference>
<dbReference type="GO" id="GO:0010629">
    <property type="term" value="P:negative regulation of gene expression"/>
    <property type="evidence" value="ECO:0000314"/>
    <property type="project" value="BHF-UCL"/>
</dbReference>
<dbReference type="GO" id="GO:0043569">
    <property type="term" value="P:negative regulation of insulin-like growth factor receptor signaling pathway"/>
    <property type="evidence" value="ECO:0000314"/>
    <property type="project" value="BHF-UCL"/>
</dbReference>
<dbReference type="GO" id="GO:0048662">
    <property type="term" value="P:negative regulation of smooth muscle cell proliferation"/>
    <property type="evidence" value="ECO:0000314"/>
    <property type="project" value="BHF-UCL"/>
</dbReference>
<dbReference type="GO" id="GO:0010894">
    <property type="term" value="P:negative regulation of steroid biosynthetic process"/>
    <property type="evidence" value="ECO:0000314"/>
    <property type="project" value="BHF-UCL"/>
</dbReference>
<dbReference type="GO" id="GO:0000122">
    <property type="term" value="P:negative regulation of transcription by RNA polymerase II"/>
    <property type="evidence" value="ECO:0000314"/>
    <property type="project" value="BHF-UCL"/>
</dbReference>
<dbReference type="GO" id="GO:0030512">
    <property type="term" value="P:negative regulation of transforming growth factor beta receptor signaling pathway"/>
    <property type="evidence" value="ECO:0000316"/>
    <property type="project" value="ARUK-UCL"/>
</dbReference>
<dbReference type="GO" id="GO:0007219">
    <property type="term" value="P:Notch signaling pathway"/>
    <property type="evidence" value="ECO:0000250"/>
    <property type="project" value="UniProtKB"/>
</dbReference>
<dbReference type="GO" id="GO:0042475">
    <property type="term" value="P:odontogenesis of dentin-containing tooth"/>
    <property type="evidence" value="ECO:0000250"/>
    <property type="project" value="UniProtKB"/>
</dbReference>
<dbReference type="GO" id="GO:0001649">
    <property type="term" value="P:osteoblast differentiation"/>
    <property type="evidence" value="ECO:0000314"/>
    <property type="project" value="MGI"/>
</dbReference>
<dbReference type="GO" id="GO:0030316">
    <property type="term" value="P:osteoclast differentiation"/>
    <property type="evidence" value="ECO:0000315"/>
    <property type="project" value="BHF-UCL"/>
</dbReference>
<dbReference type="GO" id="GO:0060039">
    <property type="term" value="P:pericardium development"/>
    <property type="evidence" value="ECO:0000250"/>
    <property type="project" value="UniProtKB"/>
</dbReference>
<dbReference type="GO" id="GO:0043065">
    <property type="term" value="P:positive regulation of apoptotic process"/>
    <property type="evidence" value="ECO:0000314"/>
    <property type="project" value="MGI"/>
</dbReference>
<dbReference type="GO" id="GO:0048711">
    <property type="term" value="P:positive regulation of astrocyte differentiation"/>
    <property type="evidence" value="ECO:0000250"/>
    <property type="project" value="UniProtKB"/>
</dbReference>
<dbReference type="GO" id="GO:0030501">
    <property type="term" value="P:positive regulation of bone mineralization"/>
    <property type="evidence" value="ECO:0000314"/>
    <property type="project" value="BHF-UCL"/>
</dbReference>
<dbReference type="GO" id="GO:1900159">
    <property type="term" value="P:positive regulation of bone mineralization involved in bone maturation"/>
    <property type="evidence" value="ECO:0000314"/>
    <property type="project" value="BHF-UCL"/>
</dbReference>
<dbReference type="GO" id="GO:0061036">
    <property type="term" value="P:positive regulation of cartilage development"/>
    <property type="evidence" value="ECO:0000314"/>
    <property type="project" value="MGI"/>
</dbReference>
<dbReference type="GO" id="GO:0030335">
    <property type="term" value="P:positive regulation of cell migration"/>
    <property type="evidence" value="ECO:0000250"/>
    <property type="project" value="UniProtKB"/>
</dbReference>
<dbReference type="GO" id="GO:0008284">
    <property type="term" value="P:positive regulation of cell population proliferation"/>
    <property type="evidence" value="ECO:0000315"/>
    <property type="project" value="BHF-UCL"/>
</dbReference>
<dbReference type="GO" id="GO:0045893">
    <property type="term" value="P:positive regulation of DNA-templated transcription"/>
    <property type="evidence" value="ECO:0000314"/>
    <property type="project" value="UniProtKB"/>
</dbReference>
<dbReference type="GO" id="GO:0010718">
    <property type="term" value="P:positive regulation of epithelial to mesenchymal transition"/>
    <property type="evidence" value="ECO:0000314"/>
    <property type="project" value="BHF-UCL"/>
</dbReference>
<dbReference type="GO" id="GO:0070374">
    <property type="term" value="P:positive regulation of ERK1 and ERK2 cascade"/>
    <property type="evidence" value="ECO:0000314"/>
    <property type="project" value="DFLAT"/>
</dbReference>
<dbReference type="GO" id="GO:0003331">
    <property type="term" value="P:positive regulation of extracellular matrix constituent secretion"/>
    <property type="evidence" value="ECO:0000250"/>
    <property type="project" value="BHF-UCL"/>
</dbReference>
<dbReference type="GO" id="GO:0045600">
    <property type="term" value="P:positive regulation of fat cell differentiation"/>
    <property type="evidence" value="ECO:0000250"/>
    <property type="project" value="UniProtKB"/>
</dbReference>
<dbReference type="GO" id="GO:0010628">
    <property type="term" value="P:positive regulation of gene expression"/>
    <property type="evidence" value="ECO:0000314"/>
    <property type="project" value="UniProtKB"/>
</dbReference>
<dbReference type="GO" id="GO:0043410">
    <property type="term" value="P:positive regulation of MAPK cascade"/>
    <property type="evidence" value="ECO:0000314"/>
    <property type="project" value="DFLAT"/>
</dbReference>
<dbReference type="GO" id="GO:1902895">
    <property type="term" value="P:positive regulation of miRNA transcription"/>
    <property type="evidence" value="ECO:0007669"/>
    <property type="project" value="Ensembl"/>
</dbReference>
<dbReference type="GO" id="GO:0045666">
    <property type="term" value="P:positive regulation of neuron differentiation"/>
    <property type="evidence" value="ECO:0000250"/>
    <property type="project" value="UniProtKB"/>
</dbReference>
<dbReference type="GO" id="GO:1901331">
    <property type="term" value="P:positive regulation of odontoblast differentiation"/>
    <property type="evidence" value="ECO:0000250"/>
    <property type="project" value="UniProtKB"/>
</dbReference>
<dbReference type="GO" id="GO:0042482">
    <property type="term" value="P:positive regulation of odontogenesis"/>
    <property type="evidence" value="ECO:0000250"/>
    <property type="project" value="UniProtKB"/>
</dbReference>
<dbReference type="GO" id="GO:0045778">
    <property type="term" value="P:positive regulation of ossification"/>
    <property type="evidence" value="ECO:0000314"/>
    <property type="project" value="MGI"/>
</dbReference>
<dbReference type="GO" id="GO:0045669">
    <property type="term" value="P:positive regulation of osteoblast differentiation"/>
    <property type="evidence" value="ECO:0007669"/>
    <property type="project" value="Ensembl"/>
</dbReference>
<dbReference type="GO" id="GO:0033690">
    <property type="term" value="P:positive regulation of osteoblast proliferation"/>
    <property type="evidence" value="ECO:0000250"/>
    <property type="project" value="UniProtKB"/>
</dbReference>
<dbReference type="GO" id="GO:1900745">
    <property type="term" value="P:positive regulation of p38MAPK cascade"/>
    <property type="evidence" value="ECO:0000314"/>
    <property type="project" value="DFLAT"/>
</dbReference>
<dbReference type="GO" id="GO:0035360">
    <property type="term" value="P:positive regulation of peroxisome proliferator activated receptor signaling pathway"/>
    <property type="evidence" value="ECO:0000316"/>
    <property type="project" value="ARUK-UCL"/>
</dbReference>
<dbReference type="GO" id="GO:0010922">
    <property type="term" value="P:positive regulation of phosphatase activity"/>
    <property type="evidence" value="ECO:0000314"/>
    <property type="project" value="MGI"/>
</dbReference>
<dbReference type="GO" id="GO:0001934">
    <property type="term" value="P:positive regulation of protein phosphorylation"/>
    <property type="evidence" value="ECO:0000314"/>
    <property type="project" value="UniProtKB"/>
</dbReference>
<dbReference type="GO" id="GO:0060391">
    <property type="term" value="P:positive regulation of SMAD protein signal transduction"/>
    <property type="evidence" value="ECO:0000314"/>
    <property type="project" value="BHF-UCL"/>
</dbReference>
<dbReference type="GO" id="GO:0045944">
    <property type="term" value="P:positive regulation of transcription by RNA polymerase II"/>
    <property type="evidence" value="ECO:0000314"/>
    <property type="project" value="BHF-UCL"/>
</dbReference>
<dbReference type="GO" id="GO:0030177">
    <property type="term" value="P:positive regulation of Wnt signaling pathway"/>
    <property type="evidence" value="ECO:0000250"/>
    <property type="project" value="UniProtKB"/>
</dbReference>
<dbReference type="GO" id="GO:0031648">
    <property type="term" value="P:protein destabilization"/>
    <property type="evidence" value="ECO:0007669"/>
    <property type="project" value="Ensembl"/>
</dbReference>
<dbReference type="GO" id="GO:0006029">
    <property type="term" value="P:proteoglycan metabolic process"/>
    <property type="evidence" value="ECO:0007669"/>
    <property type="project" value="Ensembl"/>
</dbReference>
<dbReference type="GO" id="GO:0006355">
    <property type="term" value="P:regulation of DNA-templated transcription"/>
    <property type="evidence" value="ECO:0000314"/>
    <property type="project" value="HGNC-UCL"/>
</dbReference>
<dbReference type="GO" id="GO:0042487">
    <property type="term" value="P:regulation of odontogenesis of dentin-containing tooth"/>
    <property type="evidence" value="ECO:0007669"/>
    <property type="project" value="Ensembl"/>
</dbReference>
<dbReference type="GO" id="GO:0009617">
    <property type="term" value="P:response to bacterium"/>
    <property type="evidence" value="ECO:0007669"/>
    <property type="project" value="Ensembl"/>
</dbReference>
<dbReference type="GO" id="GO:0001666">
    <property type="term" value="P:response to hypoxia"/>
    <property type="evidence" value="ECO:0000250"/>
    <property type="project" value="UniProtKB"/>
</dbReference>
<dbReference type="GO" id="GO:0001501">
    <property type="term" value="P:skeletal system development"/>
    <property type="evidence" value="ECO:0000304"/>
    <property type="project" value="ProtInc"/>
</dbReference>
<dbReference type="GO" id="GO:0021537">
    <property type="term" value="P:telencephalon development"/>
    <property type="evidence" value="ECO:0000314"/>
    <property type="project" value="MGI"/>
</dbReference>
<dbReference type="GO" id="GO:0021978">
    <property type="term" value="P:telencephalon regionalization"/>
    <property type="evidence" value="ECO:0000250"/>
    <property type="project" value="UniProtKB"/>
</dbReference>
<dbReference type="GO" id="GO:0060129">
    <property type="term" value="P:thyroid-stimulating hormone-secreting cell differentiation"/>
    <property type="evidence" value="ECO:0000250"/>
    <property type="project" value="UniProtKB"/>
</dbReference>
<dbReference type="GO" id="GO:0006366">
    <property type="term" value="P:transcription by RNA polymerase II"/>
    <property type="evidence" value="ECO:0007669"/>
    <property type="project" value="Ensembl"/>
</dbReference>
<dbReference type="CDD" id="cd19390">
    <property type="entry name" value="TGF_beta_BMP2"/>
    <property type="match status" value="1"/>
</dbReference>
<dbReference type="FunFam" id="2.10.90.10:FF:000103">
    <property type="entry name" value="Bone morphogenetic protein 16"/>
    <property type="match status" value="1"/>
</dbReference>
<dbReference type="FunFam" id="2.60.120.970:FF:000009">
    <property type="entry name" value="bone morphogenetic protein 2"/>
    <property type="match status" value="1"/>
</dbReference>
<dbReference type="Gene3D" id="2.60.120.970">
    <property type="match status" value="1"/>
</dbReference>
<dbReference type="Gene3D" id="2.10.90.10">
    <property type="entry name" value="Cystine-knot cytokines"/>
    <property type="match status" value="1"/>
</dbReference>
<dbReference type="IDEAL" id="IID00354"/>
<dbReference type="InterPro" id="IPR047953">
    <property type="entry name" value="BMP2_TGF_beta-like"/>
</dbReference>
<dbReference type="InterPro" id="IPR029034">
    <property type="entry name" value="Cystine-knot_cytokine"/>
</dbReference>
<dbReference type="InterPro" id="IPR001839">
    <property type="entry name" value="TGF-b_C"/>
</dbReference>
<dbReference type="InterPro" id="IPR001111">
    <property type="entry name" value="TGF-b_propeptide"/>
</dbReference>
<dbReference type="InterPro" id="IPR015615">
    <property type="entry name" value="TGF-beta-rel"/>
</dbReference>
<dbReference type="InterPro" id="IPR017948">
    <property type="entry name" value="TGFb_CS"/>
</dbReference>
<dbReference type="PANTHER" id="PTHR11848:SF143">
    <property type="entry name" value="BONE MORPHOGENETIC PROTEIN 2"/>
    <property type="match status" value="1"/>
</dbReference>
<dbReference type="PANTHER" id="PTHR11848">
    <property type="entry name" value="TGF-BETA FAMILY"/>
    <property type="match status" value="1"/>
</dbReference>
<dbReference type="Pfam" id="PF00019">
    <property type="entry name" value="TGF_beta"/>
    <property type="match status" value="1"/>
</dbReference>
<dbReference type="Pfam" id="PF00688">
    <property type="entry name" value="TGFb_propeptide"/>
    <property type="match status" value="1"/>
</dbReference>
<dbReference type="PRINTS" id="PR00669">
    <property type="entry name" value="INHIBINA"/>
</dbReference>
<dbReference type="SMART" id="SM00204">
    <property type="entry name" value="TGFB"/>
    <property type="match status" value="1"/>
</dbReference>
<dbReference type="SUPFAM" id="SSF57501">
    <property type="entry name" value="Cystine-knot cytokines"/>
    <property type="match status" value="1"/>
</dbReference>
<dbReference type="PROSITE" id="PS00250">
    <property type="entry name" value="TGF_BETA_1"/>
    <property type="match status" value="1"/>
</dbReference>
<dbReference type="PROSITE" id="PS51362">
    <property type="entry name" value="TGF_BETA_2"/>
    <property type="match status" value="1"/>
</dbReference>
<sequence>MVAGTRCLLALLLPQVLLGGAAGLVPELGRRKFAAASSGRPSSQPSDEVLSEFELRLLSMFGLKQRPTPSRDAVVPPYMLDLYRRHSGQPGSPAPDHRLERAASRANTVRSFHHEESLEELPETSGKTTRRFFFNLSSIPTEEFITSAELQVFREQMQDALGNNSSFHHRINIYEIIKPATANSKFPVTRLLDTRLVNQNASRWESFDVTPAVMRWTAQGHANHGFVVEVAHLEEKQGVSKRHVRISRSLHQDEHSWSQIRPLLVTFGHDGKGHPLHKREKRQAKHKQRKRLKSSCKRHPLYVDFSDVGWNDWIVAPPGYHAFYCHGECPFPLADHLNSTNHAIVQTLVNSVNSKIPKACCVPTELSAISMLYLDENEKVVLKNYQDMVVEGCGCR</sequence>
<proteinExistence type="evidence at protein level"/>
<accession>P12643</accession>
<evidence type="ECO:0000250" key="1">
    <source>
        <dbReference type="UniProtKB" id="P12644"/>
    </source>
</evidence>
<evidence type="ECO:0000250" key="2">
    <source>
        <dbReference type="UniProtKB" id="P21274"/>
    </source>
</evidence>
<evidence type="ECO:0000255" key="3"/>
<evidence type="ECO:0000256" key="4">
    <source>
        <dbReference type="SAM" id="MobiDB-lite"/>
    </source>
</evidence>
<evidence type="ECO:0000269" key="5">
    <source>
    </source>
</evidence>
<evidence type="ECO:0000269" key="6">
    <source>
    </source>
</evidence>
<evidence type="ECO:0000269" key="7">
    <source>
    </source>
</evidence>
<evidence type="ECO:0000269" key="8">
    <source>
    </source>
</evidence>
<evidence type="ECO:0000269" key="9">
    <source>
    </source>
</evidence>
<evidence type="ECO:0000269" key="10">
    <source>
    </source>
</evidence>
<evidence type="ECO:0000269" key="11">
    <source>
    </source>
</evidence>
<evidence type="ECO:0000269" key="12">
    <source>
    </source>
</evidence>
<evidence type="ECO:0000269" key="13">
    <source>
    </source>
</evidence>
<evidence type="ECO:0000269" key="14">
    <source>
    </source>
</evidence>
<evidence type="ECO:0000269" key="15">
    <source>
    </source>
</evidence>
<evidence type="ECO:0000269" key="16">
    <source>
    </source>
</evidence>
<evidence type="ECO:0000269" key="17">
    <source>
    </source>
</evidence>
<evidence type="ECO:0000269" key="18">
    <source>
    </source>
</evidence>
<evidence type="ECO:0000269" key="19">
    <source>
    </source>
</evidence>
<evidence type="ECO:0000269" key="20">
    <source>
    </source>
</evidence>
<evidence type="ECO:0000269" key="21">
    <source>
    </source>
</evidence>
<evidence type="ECO:0000269" key="22">
    <source>
    </source>
</evidence>
<evidence type="ECO:0000269" key="23">
    <source>
    </source>
</evidence>
<evidence type="ECO:0000305" key="24"/>
<evidence type="ECO:0007744" key="25">
    <source>
        <dbReference type="PDB" id="1REU"/>
    </source>
</evidence>
<evidence type="ECO:0007744" key="26">
    <source>
        <dbReference type="PDB" id="1REW"/>
    </source>
</evidence>
<evidence type="ECO:0007744" key="27">
    <source>
        <dbReference type="PDB" id="2H62"/>
    </source>
</evidence>
<evidence type="ECO:0007744" key="28">
    <source>
        <dbReference type="PDB" id="2H64"/>
    </source>
</evidence>
<evidence type="ECO:0007744" key="29">
    <source>
        <dbReference type="PDB" id="6OMN"/>
    </source>
</evidence>
<evidence type="ECO:0007829" key="30">
    <source>
        <dbReference type="PDB" id="1REU"/>
    </source>
</evidence>
<evidence type="ECO:0007829" key="31">
    <source>
        <dbReference type="PDB" id="2H62"/>
    </source>
</evidence>
<evidence type="ECO:0007829" key="32">
    <source>
        <dbReference type="PDB" id="4UI1"/>
    </source>
</evidence>
<evidence type="ECO:0007829" key="33">
    <source>
        <dbReference type="PDB" id="4UI2"/>
    </source>
</evidence>
<keyword id="KW-0002">3D-structure</keyword>
<keyword id="KW-0891">Chondrogenesis</keyword>
<keyword id="KW-0165">Cleavage on pair of basic residues</keyword>
<keyword id="KW-0202">Cytokine</keyword>
<keyword id="KW-0217">Developmental protein</keyword>
<keyword id="KW-0221">Differentiation</keyword>
<keyword id="KW-0225">Disease variant</keyword>
<keyword id="KW-1015">Disulfide bond</keyword>
<keyword id="KW-0242">Dwarfism</keyword>
<keyword id="KW-0325">Glycoprotein</keyword>
<keyword id="KW-0339">Growth factor</keyword>
<keyword id="KW-0892">Osteogenesis</keyword>
<keyword id="KW-0582">Pharmaceutical</keyword>
<keyword id="KW-0597">Phosphoprotein</keyword>
<keyword id="KW-1267">Proteomics identification</keyword>
<keyword id="KW-1185">Reference proteome</keyword>
<keyword id="KW-0964">Secreted</keyword>
<keyword id="KW-0732">Signal</keyword>
<feature type="signal peptide" evidence="3">
    <location>
        <begin position="1"/>
        <end position="23"/>
    </location>
</feature>
<feature type="propeptide" id="PRO_0000033824" description="Cleaved by PCSK5">
    <location>
        <begin position="24"/>
        <end position="282"/>
    </location>
</feature>
<feature type="chain" id="PRO_0000033825" description="Bone morphogenetic protein 2">
    <location>
        <begin position="283"/>
        <end position="396"/>
    </location>
</feature>
<feature type="region of interest" description="Disordered" evidence="4">
    <location>
        <begin position="84"/>
        <end position="121"/>
    </location>
</feature>
<feature type="region of interest" description="Disordered" evidence="4">
    <location>
        <begin position="271"/>
        <end position="293"/>
    </location>
</feature>
<feature type="compositionally biased region" description="Basic residues" evidence="4">
    <location>
        <begin position="274"/>
        <end position="293"/>
    </location>
</feature>
<feature type="modified residue" description="Phosphoserine" evidence="1">
    <location>
        <position position="87"/>
    </location>
</feature>
<feature type="glycosylation site" description="N-linked (GlcNAc...) asparagine" evidence="3">
    <location>
        <position position="135"/>
    </location>
</feature>
<feature type="glycosylation site" description="N-linked (GlcNAc...) asparagine" evidence="3">
    <location>
        <position position="163"/>
    </location>
</feature>
<feature type="glycosylation site" description="N-linked (GlcNAc...) asparagine" evidence="3">
    <location>
        <position position="164"/>
    </location>
</feature>
<feature type="glycosylation site" description="N-linked (GlcNAc...) asparagine" evidence="3">
    <location>
        <position position="200"/>
    </location>
</feature>
<feature type="glycosylation site" description="N-linked (GlcNAc...) (high mannose) asparagine" evidence="23">
    <location>
        <position position="338"/>
    </location>
</feature>
<feature type="disulfide bond">
    <location>
        <begin position="296"/>
        <end position="361"/>
    </location>
</feature>
<feature type="disulfide bond">
    <location>
        <begin position="325"/>
        <end position="393"/>
    </location>
</feature>
<feature type="disulfide bond">
    <location>
        <begin position="329"/>
        <end position="395"/>
    </location>
</feature>
<feature type="disulfide bond" description="Interchain">
    <location>
        <position position="360"/>
    </location>
</feature>
<feature type="sequence variant" id="VAR_080742" description="In SSFSC1." evidence="17">
    <location>
        <begin position="27"/>
        <end position="396"/>
    </location>
</feature>
<feature type="sequence variant" id="VAR_020061" description="In dbSNP:rs2273073.">
    <original>S</original>
    <variation>A</variation>
    <location>
        <position position="37"/>
    </location>
</feature>
<feature type="sequence variant" id="VAR_052568" description="In dbSNP:rs36105541.">
    <original>P</original>
    <variation>S</variation>
    <location>
        <position position="77"/>
    </location>
</feature>
<feature type="sequence variant" id="VAR_020062" description="In dbSNP:rs2273074.">
    <original>A</original>
    <variation>T</variation>
    <location>
        <position position="106"/>
    </location>
</feature>
<feature type="sequence variant" id="VAR_080743" description="In SSFSC1." evidence="17">
    <location>
        <begin position="154"/>
        <end position="396"/>
    </location>
</feature>
<feature type="sequence variant" id="VAR_052569" description="In dbSNP:rs34183594.">
    <original>L</original>
    <variation>S</variation>
    <location>
        <position position="161"/>
    </location>
</feature>
<feature type="sequence variant" id="VAR_024232" description="In dbSNP:rs235768.">
    <original>R</original>
    <variation>S</variation>
    <location>
        <position position="190"/>
    </location>
</feature>
<feature type="sequence variant" id="VAR_080744" description="In SSFSC1." evidence="17">
    <location>
        <begin position="329"/>
        <end position="396"/>
    </location>
</feature>
<feature type="sequence variant" id="VAR_052570" description="In dbSNP:rs11545591.">
    <original>D</original>
    <variation>G</variation>
    <location>
        <position position="387"/>
    </location>
</feature>
<feature type="mutagenesis site" description="Complete loss of type I receptor binding." evidence="7">
    <original>L</original>
    <variation>P</variation>
    <location>
        <position position="333"/>
    </location>
</feature>
<feature type="strand" evidence="31">
    <location>
        <begin position="295"/>
        <end position="299"/>
    </location>
</feature>
<feature type="strand" evidence="31">
    <location>
        <begin position="302"/>
        <end position="304"/>
    </location>
</feature>
<feature type="helix" evidence="31">
    <location>
        <begin position="305"/>
        <end position="308"/>
    </location>
</feature>
<feature type="turn" evidence="31">
    <location>
        <begin position="311"/>
        <end position="313"/>
    </location>
</feature>
<feature type="strand" evidence="31">
    <location>
        <begin position="314"/>
        <end position="316"/>
    </location>
</feature>
<feature type="strand" evidence="31">
    <location>
        <begin position="318"/>
        <end position="321"/>
    </location>
</feature>
<feature type="strand" evidence="31">
    <location>
        <begin position="324"/>
        <end position="326"/>
    </location>
</feature>
<feature type="helix" evidence="33">
    <location>
        <begin position="333"/>
        <end position="336"/>
    </location>
</feature>
<feature type="strand" evidence="31">
    <location>
        <begin position="337"/>
        <end position="339"/>
    </location>
</feature>
<feature type="helix" evidence="31">
    <location>
        <begin position="341"/>
        <end position="352"/>
    </location>
</feature>
<feature type="strand" evidence="30">
    <location>
        <begin position="354"/>
        <end position="356"/>
    </location>
</feature>
<feature type="strand" evidence="31">
    <location>
        <begin position="360"/>
        <end position="374"/>
    </location>
</feature>
<feature type="helix" evidence="32">
    <location>
        <begin position="376"/>
        <end position="378"/>
    </location>
</feature>
<feature type="strand" evidence="31">
    <location>
        <begin position="380"/>
        <end position="396"/>
    </location>
</feature>
<gene>
    <name type="primary">BMP2</name>
    <name type="synonym">BMP2A</name>
</gene>
<name>BMP2_HUMAN</name>
<protein>
    <recommendedName>
        <fullName>Bone morphogenetic protein 2</fullName>
        <shortName>BMP-2</shortName>
    </recommendedName>
    <alternativeName>
        <fullName>Bone morphogenetic protein 2A</fullName>
        <shortName>BMP-2A</shortName>
    </alternativeName>
</protein>